<comment type="function">
    <text evidence="1">Plays an important role in growth control. Its major role in stimulating body growth is to stimulate the liver and other tissues to secrete IGF1. It stimulates both the differentiation and proliferation of myoblasts. It also stimulates amino acid uptake and protein synthesis in muscle and other tissues (By similarity).</text>
</comment>
<comment type="subcellular location">
    <subcellularLocation>
        <location>Secreted</location>
    </subcellularLocation>
</comment>
<comment type="similarity">
    <text evidence="3">Belongs to the somatotropin/prolactin family.</text>
</comment>
<name>SOMA_CALJA</name>
<accession>Q9GMB3</accession>
<gene>
    <name type="primary">GH1</name>
</gene>
<feature type="signal peptide" evidence="1">
    <location>
        <begin position="1"/>
        <end position="24"/>
    </location>
</feature>
<feature type="chain" id="PRO_0000032976" description="Somatotropin">
    <location>
        <begin position="25"/>
        <end position="217"/>
    </location>
</feature>
<feature type="binding site" evidence="1">
    <location>
        <position position="44"/>
    </location>
    <ligand>
        <name>Zn(2+)</name>
        <dbReference type="ChEBI" id="CHEBI:29105"/>
    </ligand>
</feature>
<feature type="binding site" evidence="1">
    <location>
        <position position="200"/>
    </location>
    <ligand>
        <name>Zn(2+)</name>
        <dbReference type="ChEBI" id="CHEBI:29105"/>
    </ligand>
</feature>
<feature type="modified residue" description="Phosphoserine" evidence="2">
    <location>
        <position position="132"/>
    </location>
</feature>
<feature type="disulfide bond" evidence="1">
    <location>
        <begin position="79"/>
        <end position="191"/>
    </location>
</feature>
<feature type="disulfide bond" evidence="1">
    <location>
        <begin position="208"/>
        <end position="215"/>
    </location>
</feature>
<organism>
    <name type="scientific">Callithrix jacchus</name>
    <name type="common">White-tufted-ear marmoset</name>
    <dbReference type="NCBI Taxonomy" id="9483"/>
    <lineage>
        <taxon>Eukaryota</taxon>
        <taxon>Metazoa</taxon>
        <taxon>Chordata</taxon>
        <taxon>Craniata</taxon>
        <taxon>Vertebrata</taxon>
        <taxon>Euteleostomi</taxon>
        <taxon>Mammalia</taxon>
        <taxon>Eutheria</taxon>
        <taxon>Euarchontoglires</taxon>
        <taxon>Primates</taxon>
        <taxon>Haplorrhini</taxon>
        <taxon>Platyrrhini</taxon>
        <taxon>Cebidae</taxon>
        <taxon>Callitrichinae</taxon>
        <taxon>Callithrix</taxon>
        <taxon>Callithrix</taxon>
    </lineage>
</organism>
<keyword id="KW-1015">Disulfide bond</keyword>
<keyword id="KW-0372">Hormone</keyword>
<keyword id="KW-0479">Metal-binding</keyword>
<keyword id="KW-0597">Phosphoprotein</keyword>
<keyword id="KW-1185">Reference proteome</keyword>
<keyword id="KW-0964">Secreted</keyword>
<keyword id="KW-0732">Signal</keyword>
<keyword id="KW-0862">Zinc</keyword>
<proteinExistence type="inferred from homology"/>
<evidence type="ECO:0000250" key="1"/>
<evidence type="ECO:0000250" key="2">
    <source>
        <dbReference type="UniProtKB" id="P01241"/>
    </source>
</evidence>
<evidence type="ECO:0000305" key="3"/>
<reference key="1">
    <citation type="submission" date="2000-08" db="EMBL/GenBank/DDBJ databases">
        <title>Cloning and characterisation of a putative growth hormone encoding gene from the marmoset (Callithrix jacchus).</title>
        <authorList>
            <person name="Wallis O.C."/>
            <person name="Wallis M."/>
        </authorList>
    </citation>
    <scope>NUCLEOTIDE SEQUENCE [GENOMIC DNA]</scope>
</reference>
<sequence>MAAGSWTSLLLAFTLLCLPQLREAGAFPTIPLSRLLDNAMLRAHRLHQLAFDTYQEFEEAYIPKEQKYSFLQNPQTSLCFSESIPTPASKKETQQKSNLELLRMSLLLIQSWFEPVQFLRSVFANSLLYGVSDSDVYEYLKDLEEGIQTLMGRLEDGSPRTGEIFMQTYRKFDVNSQNNDALLKNYGLLYCFRKDMDKVETFLRIVQCRSVEGSCGF</sequence>
<dbReference type="EMBL" id="AJ297563">
    <property type="protein sequence ID" value="CAC03481.1"/>
    <property type="molecule type" value="Genomic_DNA"/>
</dbReference>
<dbReference type="RefSeq" id="NP_001277275.1">
    <property type="nucleotide sequence ID" value="NM_001290346.1"/>
</dbReference>
<dbReference type="RefSeq" id="XP_035153739.1">
    <property type="nucleotide sequence ID" value="XM_035297848.2"/>
</dbReference>
<dbReference type="SMR" id="Q9GMB3"/>
<dbReference type="FunCoup" id="Q9GMB3">
    <property type="interactions" value="975"/>
</dbReference>
<dbReference type="STRING" id="9483.ENSCJAP00000069619"/>
<dbReference type="Ensembl" id="ENSCJAT00000102129.2">
    <property type="protein sequence ID" value="ENSCJAP00000069619.1"/>
    <property type="gene ID" value="ENSCJAG00000075159.1"/>
</dbReference>
<dbReference type="GeneID" id="100392546"/>
<dbReference type="KEGG" id="cjc:100392546"/>
<dbReference type="CTD" id="2688"/>
<dbReference type="eggNOG" id="ENOG502R5GJ">
    <property type="taxonomic scope" value="Eukaryota"/>
</dbReference>
<dbReference type="GeneTree" id="ENSGT00950000182818"/>
<dbReference type="InParanoid" id="Q9GMB3"/>
<dbReference type="OrthoDB" id="9537348at2759"/>
<dbReference type="Proteomes" id="UP000008225">
    <property type="component" value="Chromosome 5"/>
</dbReference>
<dbReference type="GO" id="GO:0005615">
    <property type="term" value="C:extracellular space"/>
    <property type="evidence" value="ECO:0007669"/>
    <property type="project" value="InterPro"/>
</dbReference>
<dbReference type="GO" id="GO:0008083">
    <property type="term" value="F:growth factor activity"/>
    <property type="evidence" value="ECO:0007669"/>
    <property type="project" value="TreeGrafter"/>
</dbReference>
<dbReference type="GO" id="GO:0005131">
    <property type="term" value="F:growth hormone receptor binding"/>
    <property type="evidence" value="ECO:0007669"/>
    <property type="project" value="InterPro"/>
</dbReference>
<dbReference type="GO" id="GO:0005179">
    <property type="term" value="F:hormone activity"/>
    <property type="evidence" value="ECO:0007669"/>
    <property type="project" value="UniProtKB-KW"/>
</dbReference>
<dbReference type="GO" id="GO:0046872">
    <property type="term" value="F:metal ion binding"/>
    <property type="evidence" value="ECO:0007669"/>
    <property type="project" value="UniProtKB-KW"/>
</dbReference>
<dbReference type="GO" id="GO:0048513">
    <property type="term" value="P:animal organ development"/>
    <property type="evidence" value="ECO:0007669"/>
    <property type="project" value="TreeGrafter"/>
</dbReference>
<dbReference type="GO" id="GO:0060396">
    <property type="term" value="P:growth hormone receptor signaling pathway"/>
    <property type="evidence" value="ECO:0007669"/>
    <property type="project" value="TreeGrafter"/>
</dbReference>
<dbReference type="GO" id="GO:0045927">
    <property type="term" value="P:positive regulation of growth"/>
    <property type="evidence" value="ECO:0007669"/>
    <property type="project" value="TreeGrafter"/>
</dbReference>
<dbReference type="GO" id="GO:0046427">
    <property type="term" value="P:positive regulation of receptor signaling pathway via JAK-STAT"/>
    <property type="evidence" value="ECO:0007669"/>
    <property type="project" value="TreeGrafter"/>
</dbReference>
<dbReference type="GO" id="GO:0031667">
    <property type="term" value="P:response to nutrient levels"/>
    <property type="evidence" value="ECO:0007669"/>
    <property type="project" value="TreeGrafter"/>
</dbReference>
<dbReference type="CDD" id="cd10285">
    <property type="entry name" value="somatotropin_like"/>
    <property type="match status" value="1"/>
</dbReference>
<dbReference type="FunFam" id="1.20.1250.10:FF:000012">
    <property type="entry name" value="Growth hormone 1"/>
    <property type="match status" value="1"/>
</dbReference>
<dbReference type="Gene3D" id="1.20.1250.10">
    <property type="match status" value="1"/>
</dbReference>
<dbReference type="InterPro" id="IPR009079">
    <property type="entry name" value="4_helix_cytokine-like_core"/>
</dbReference>
<dbReference type="InterPro" id="IPR034975">
    <property type="entry name" value="Somatotropin"/>
</dbReference>
<dbReference type="InterPro" id="IPR001400">
    <property type="entry name" value="Somatotropin/Prolactin"/>
</dbReference>
<dbReference type="InterPro" id="IPR018116">
    <property type="entry name" value="Somatotropin_CS"/>
</dbReference>
<dbReference type="PANTHER" id="PTHR11417:SF2">
    <property type="entry name" value="SOMATOTROPIN"/>
    <property type="match status" value="1"/>
</dbReference>
<dbReference type="PANTHER" id="PTHR11417">
    <property type="entry name" value="SOMATOTROPIN,PROLACTIN"/>
    <property type="match status" value="1"/>
</dbReference>
<dbReference type="Pfam" id="PF00103">
    <property type="entry name" value="Hormone_1"/>
    <property type="match status" value="1"/>
</dbReference>
<dbReference type="PRINTS" id="PR00836">
    <property type="entry name" value="SOMATOTROPIN"/>
</dbReference>
<dbReference type="SUPFAM" id="SSF47266">
    <property type="entry name" value="4-helical cytokines"/>
    <property type="match status" value="1"/>
</dbReference>
<dbReference type="PROSITE" id="PS00266">
    <property type="entry name" value="SOMATOTROPIN_1"/>
    <property type="match status" value="1"/>
</dbReference>
<dbReference type="PROSITE" id="PS00338">
    <property type="entry name" value="SOMATOTROPIN_2"/>
    <property type="match status" value="1"/>
</dbReference>
<protein>
    <recommendedName>
        <fullName>Somatotropin</fullName>
    </recommendedName>
    <alternativeName>
        <fullName>Growth hormone</fullName>
    </alternativeName>
</protein>